<dbReference type="EMBL" id="AAHF01000008">
    <property type="protein sequence ID" value="EAL87708.1"/>
    <property type="molecule type" value="Genomic_DNA"/>
</dbReference>
<dbReference type="RefSeq" id="XP_749746.1">
    <property type="nucleotide sequence ID" value="XM_744653.1"/>
</dbReference>
<dbReference type="FunCoup" id="Q4WH97">
    <property type="interactions" value="24"/>
</dbReference>
<dbReference type="STRING" id="330879.Q4WH97"/>
<dbReference type="GlyCosmos" id="Q4WH97">
    <property type="glycosylation" value="3 sites, No reported glycans"/>
</dbReference>
<dbReference type="EnsemblFungi" id="EAL87708">
    <property type="protein sequence ID" value="EAL87708"/>
    <property type="gene ID" value="AFUA_2G06170"/>
</dbReference>
<dbReference type="GeneID" id="3506649"/>
<dbReference type="KEGG" id="afm:AFUA_2G06170"/>
<dbReference type="VEuPathDB" id="FungiDB:Afu2g06170"/>
<dbReference type="eggNOG" id="ENOG502QR9I">
    <property type="taxonomic scope" value="Eukaryota"/>
</dbReference>
<dbReference type="HOGENOM" id="CLU_017518_1_0_1"/>
<dbReference type="InParanoid" id="Q4WH97"/>
<dbReference type="OMA" id="QQQWEMY"/>
<dbReference type="OrthoDB" id="192733at2759"/>
<dbReference type="Proteomes" id="UP000002530">
    <property type="component" value="Chromosome 2"/>
</dbReference>
<dbReference type="GO" id="GO:0005774">
    <property type="term" value="C:vacuolar membrane"/>
    <property type="evidence" value="ECO:0007669"/>
    <property type="project" value="UniProtKB-SubCell"/>
</dbReference>
<dbReference type="GO" id="GO:0032974">
    <property type="term" value="P:amino acid transmembrane export from vacuole"/>
    <property type="evidence" value="ECO:0000318"/>
    <property type="project" value="GO_Central"/>
</dbReference>
<dbReference type="GO" id="GO:0006914">
    <property type="term" value="P:autophagy"/>
    <property type="evidence" value="ECO:0007669"/>
    <property type="project" value="UniProtKB-KW"/>
</dbReference>
<dbReference type="CDD" id="cd17483">
    <property type="entry name" value="MFS_Atg22_like"/>
    <property type="match status" value="1"/>
</dbReference>
<dbReference type="Gene3D" id="1.20.1250.20">
    <property type="entry name" value="MFS general substrate transporter like domains"/>
    <property type="match status" value="1"/>
</dbReference>
<dbReference type="InterPro" id="IPR044738">
    <property type="entry name" value="Atg22"/>
</dbReference>
<dbReference type="InterPro" id="IPR024671">
    <property type="entry name" value="Atg22-like"/>
</dbReference>
<dbReference type="InterPro" id="IPR050495">
    <property type="entry name" value="ATG22/LtaA_families"/>
</dbReference>
<dbReference type="InterPro" id="IPR036259">
    <property type="entry name" value="MFS_trans_sf"/>
</dbReference>
<dbReference type="PANTHER" id="PTHR23519">
    <property type="entry name" value="AUTOPHAGY-RELATED PROTEIN 22"/>
    <property type="match status" value="1"/>
</dbReference>
<dbReference type="PANTHER" id="PTHR23519:SF1">
    <property type="entry name" value="AUTOPHAGY-RELATED PROTEIN 22"/>
    <property type="match status" value="1"/>
</dbReference>
<dbReference type="Pfam" id="PF11700">
    <property type="entry name" value="ATG22"/>
    <property type="match status" value="1"/>
</dbReference>
<dbReference type="SUPFAM" id="SSF103473">
    <property type="entry name" value="MFS general substrate transporter"/>
    <property type="match status" value="1"/>
</dbReference>
<protein>
    <recommendedName>
        <fullName>Autophagy-related protein 22-1</fullName>
    </recommendedName>
</protein>
<gene>
    <name type="primary">atg22-1</name>
    <name type="ORF">AFUA_2G06170</name>
</gene>
<organism>
    <name type="scientific">Aspergillus fumigatus (strain ATCC MYA-4609 / CBS 101355 / FGSC A1100 / Af293)</name>
    <name type="common">Neosartorya fumigata</name>
    <dbReference type="NCBI Taxonomy" id="330879"/>
    <lineage>
        <taxon>Eukaryota</taxon>
        <taxon>Fungi</taxon>
        <taxon>Dikarya</taxon>
        <taxon>Ascomycota</taxon>
        <taxon>Pezizomycotina</taxon>
        <taxon>Eurotiomycetes</taxon>
        <taxon>Eurotiomycetidae</taxon>
        <taxon>Eurotiales</taxon>
        <taxon>Aspergillaceae</taxon>
        <taxon>Aspergillus</taxon>
        <taxon>Aspergillus subgen. Fumigati</taxon>
    </lineage>
</organism>
<comment type="function">
    <text evidence="1">Vacuolar effluxer which mediate the efflux of amino acids resulting from autophagic degradation. The release of autophagic amino acids allows the maintenance of protein synthesis and viability during nitrogen starvation (By similarity).</text>
</comment>
<comment type="subcellular location">
    <subcellularLocation>
        <location evidence="1">Vacuole membrane</location>
        <topology evidence="1">Multi-pass membrane protein</topology>
    </subcellularLocation>
    <text evidence="1">Vacuole and punctate structures.</text>
</comment>
<comment type="similarity">
    <text evidence="4">Belongs to the ATG22 family.</text>
</comment>
<name>AT221_ASPFU</name>
<sequence>MRAGHETETSIMRPQYPGDDIRPTSKKELAGWYSYGWAAEVFTVCAMGSFLPITLEQMARDRGVLFSDKVTPCSATLNGPSRMSIQARWTLSSRYDAGRPTVANQCVVYIFGVEINTASFAMYTFSVSVFIQAILIISMSGAADHGSHRKLLLMAFAVIGSVSTMLFLGVVPKIYMVGAVIAIIANTCFGASFVLLNSFLPLLVRHHPSVLRSAREPRPALDDSRAQEGHSDTTNGIEHGIESNVTSPLLHARQGNGENAEADMHPATHITVSQELKVSTRISSFGIGIGYIGAIILQIVCILVVIATNQTTYSLRLVLFLIGLWWFIFSIPAALWLRSRPGPPLATTHHGKHTRSWIGYMAYSWKSLYRTAVRTRHLKDILLFLAAWLLLSDGIATVSGTAVLFAKTQLNMQPAALGLINVIAMVAGVLGAFSWGSFSRVFNLSASQTIIACILLFELVPLYGLLGFIPAIKSLGFLGLQQPWEMFPLGIVYGLVMGGLSSYCRSFFGELIPPGNEAAFYALYAITDKGSSIFGPTIVGIITDRYGEIRPAFVFLAILIFLPLPLMLLVDVERGKRDALALAAELQPSGAQTYGTLPTNEDRAPPSEL</sequence>
<proteinExistence type="inferred from homology"/>
<evidence type="ECO:0000250" key="1"/>
<evidence type="ECO:0000255" key="2"/>
<evidence type="ECO:0000256" key="3">
    <source>
        <dbReference type="SAM" id="MobiDB-lite"/>
    </source>
</evidence>
<evidence type="ECO:0000305" key="4"/>
<feature type="chain" id="PRO_0000207617" description="Autophagy-related protein 22-1">
    <location>
        <begin position="1"/>
        <end position="609"/>
    </location>
</feature>
<feature type="transmembrane region" description="Helical" evidence="2">
    <location>
        <begin position="35"/>
        <end position="55"/>
    </location>
</feature>
<feature type="transmembrane region" description="Helical" evidence="2">
    <location>
        <begin position="117"/>
        <end position="137"/>
    </location>
</feature>
<feature type="transmembrane region" description="Helical" evidence="2">
    <location>
        <begin position="151"/>
        <end position="171"/>
    </location>
</feature>
<feature type="transmembrane region" description="Helical" evidence="2">
    <location>
        <begin position="176"/>
        <end position="196"/>
    </location>
</feature>
<feature type="transmembrane region" description="Helical" evidence="2">
    <location>
        <begin position="287"/>
        <end position="307"/>
    </location>
</feature>
<feature type="transmembrane region" description="Helical" evidence="2">
    <location>
        <begin position="317"/>
        <end position="337"/>
    </location>
</feature>
<feature type="transmembrane region" description="Helical" evidence="2">
    <location>
        <begin position="381"/>
        <end position="401"/>
    </location>
</feature>
<feature type="transmembrane region" description="Helical" evidence="2">
    <location>
        <begin position="415"/>
        <end position="435"/>
    </location>
</feature>
<feature type="transmembrane region" description="Helical" evidence="2">
    <location>
        <begin position="450"/>
        <end position="470"/>
    </location>
</feature>
<feature type="transmembrane region" description="Helical" evidence="2">
    <location>
        <begin position="477"/>
        <end position="497"/>
    </location>
</feature>
<feature type="transmembrane region" description="Helical" evidence="2">
    <location>
        <begin position="522"/>
        <end position="542"/>
    </location>
</feature>
<feature type="transmembrane region" description="Helical" evidence="2">
    <location>
        <begin position="552"/>
        <end position="572"/>
    </location>
</feature>
<feature type="region of interest" description="Disordered" evidence="3">
    <location>
        <begin position="214"/>
        <end position="240"/>
    </location>
</feature>
<feature type="compositionally biased region" description="Basic and acidic residues" evidence="3">
    <location>
        <begin position="214"/>
        <end position="231"/>
    </location>
</feature>
<feature type="glycosylation site" description="N-linked (GlcNAc...) asparagine" evidence="2">
    <location>
        <position position="244"/>
    </location>
</feature>
<feature type="glycosylation site" description="N-linked (GlcNAc...) asparagine" evidence="2">
    <location>
        <position position="309"/>
    </location>
</feature>
<feature type="glycosylation site" description="N-linked (GlcNAc...) asparagine" evidence="2">
    <location>
        <position position="443"/>
    </location>
</feature>
<reference key="1">
    <citation type="journal article" date="2005" name="Nature">
        <title>Genomic sequence of the pathogenic and allergenic filamentous fungus Aspergillus fumigatus.</title>
        <authorList>
            <person name="Nierman W.C."/>
            <person name="Pain A."/>
            <person name="Anderson M.J."/>
            <person name="Wortman J.R."/>
            <person name="Kim H.S."/>
            <person name="Arroyo J."/>
            <person name="Berriman M."/>
            <person name="Abe K."/>
            <person name="Archer D.B."/>
            <person name="Bermejo C."/>
            <person name="Bennett J.W."/>
            <person name="Bowyer P."/>
            <person name="Chen D."/>
            <person name="Collins M."/>
            <person name="Coulsen R."/>
            <person name="Davies R."/>
            <person name="Dyer P.S."/>
            <person name="Farman M.L."/>
            <person name="Fedorova N."/>
            <person name="Fedorova N.D."/>
            <person name="Feldblyum T.V."/>
            <person name="Fischer R."/>
            <person name="Fosker N."/>
            <person name="Fraser A."/>
            <person name="Garcia J.L."/>
            <person name="Garcia M.J."/>
            <person name="Goble A."/>
            <person name="Goldman G.H."/>
            <person name="Gomi K."/>
            <person name="Griffith-Jones S."/>
            <person name="Gwilliam R."/>
            <person name="Haas B.J."/>
            <person name="Haas H."/>
            <person name="Harris D.E."/>
            <person name="Horiuchi H."/>
            <person name="Huang J."/>
            <person name="Humphray S."/>
            <person name="Jimenez J."/>
            <person name="Keller N."/>
            <person name="Khouri H."/>
            <person name="Kitamoto K."/>
            <person name="Kobayashi T."/>
            <person name="Konzack S."/>
            <person name="Kulkarni R."/>
            <person name="Kumagai T."/>
            <person name="Lafton A."/>
            <person name="Latge J.-P."/>
            <person name="Li W."/>
            <person name="Lord A."/>
            <person name="Lu C."/>
            <person name="Majoros W.H."/>
            <person name="May G.S."/>
            <person name="Miller B.L."/>
            <person name="Mohamoud Y."/>
            <person name="Molina M."/>
            <person name="Monod M."/>
            <person name="Mouyna I."/>
            <person name="Mulligan S."/>
            <person name="Murphy L.D."/>
            <person name="O'Neil S."/>
            <person name="Paulsen I."/>
            <person name="Penalva M.A."/>
            <person name="Pertea M."/>
            <person name="Price C."/>
            <person name="Pritchard B.L."/>
            <person name="Quail M.A."/>
            <person name="Rabbinowitsch E."/>
            <person name="Rawlins N."/>
            <person name="Rajandream M.A."/>
            <person name="Reichard U."/>
            <person name="Renauld H."/>
            <person name="Robson G.D."/>
            <person name="Rodriguez de Cordoba S."/>
            <person name="Rodriguez-Pena J.M."/>
            <person name="Ronning C.M."/>
            <person name="Rutter S."/>
            <person name="Salzberg S.L."/>
            <person name="Sanchez M."/>
            <person name="Sanchez-Ferrero J.C."/>
            <person name="Saunders D."/>
            <person name="Seeger K."/>
            <person name="Squares R."/>
            <person name="Squares S."/>
            <person name="Takeuchi M."/>
            <person name="Tekaia F."/>
            <person name="Turner G."/>
            <person name="Vazquez de Aldana C.R."/>
            <person name="Weidman J."/>
            <person name="White O."/>
            <person name="Woodward J.R."/>
            <person name="Yu J.-H."/>
            <person name="Fraser C.M."/>
            <person name="Galagan J.E."/>
            <person name="Asai K."/>
            <person name="Machida M."/>
            <person name="Hall N."/>
            <person name="Barrell B.G."/>
            <person name="Denning D.W."/>
        </authorList>
    </citation>
    <scope>NUCLEOTIDE SEQUENCE [LARGE SCALE GENOMIC DNA]</scope>
    <source>
        <strain>ATCC MYA-4609 / CBS 101355 / FGSC A1100 / Af293</strain>
    </source>
</reference>
<keyword id="KW-0029">Amino-acid transport</keyword>
<keyword id="KW-0072">Autophagy</keyword>
<keyword id="KW-0325">Glycoprotein</keyword>
<keyword id="KW-0472">Membrane</keyword>
<keyword id="KW-1185">Reference proteome</keyword>
<keyword id="KW-0812">Transmembrane</keyword>
<keyword id="KW-1133">Transmembrane helix</keyword>
<keyword id="KW-0813">Transport</keyword>
<keyword id="KW-0926">Vacuole</keyword>
<accession>Q4WH97</accession>